<feature type="signal peptide" evidence="2">
    <location>
        <begin position="1"/>
        <end position="22"/>
    </location>
</feature>
<feature type="chain" id="PRO_0000428824" description="Potassium channel toxin alpha-KTx 16.6">
    <location>
        <begin position="23"/>
        <end position="58"/>
    </location>
</feature>
<feature type="site" description="Basic residue of the functional dyad" evidence="1">
    <location>
        <position position="49"/>
    </location>
</feature>
<feature type="site" description="Aromatic residue of the functional dyad" evidence="1">
    <location>
        <position position="58"/>
    </location>
</feature>
<feature type="disulfide bond" evidence="1">
    <location>
        <begin position="29"/>
        <end position="50"/>
    </location>
</feature>
<feature type="disulfide bond" evidence="1">
    <location>
        <begin position="35"/>
        <end position="55"/>
    </location>
</feature>
<feature type="disulfide bond" evidence="1">
    <location>
        <begin position="39"/>
        <end position="57"/>
    </location>
</feature>
<reference key="1">
    <citation type="submission" date="2008-10" db="EMBL/GenBank/DDBJ databases">
        <title>Buthus occitanus israelis scorpion toxin.</title>
        <authorList>
            <person name="Zilberberg N."/>
            <person name="Kozminsky-Atias A."/>
        </authorList>
    </citation>
    <scope>NUCLEOTIDE SEQUENCE [MRNA]</scope>
    <source>
        <tissue>Venom gland</tissue>
    </source>
</reference>
<proteinExistence type="evidence at transcript level"/>
<organism>
    <name type="scientific">Buthus israelis</name>
    <name type="common">Israeli scorpion</name>
    <name type="synonym">Buthus occitanus israelis</name>
    <dbReference type="NCBI Taxonomy" id="2899555"/>
    <lineage>
        <taxon>Eukaryota</taxon>
        <taxon>Metazoa</taxon>
        <taxon>Ecdysozoa</taxon>
        <taxon>Arthropoda</taxon>
        <taxon>Chelicerata</taxon>
        <taxon>Arachnida</taxon>
        <taxon>Scorpiones</taxon>
        <taxon>Buthida</taxon>
        <taxon>Buthoidea</taxon>
        <taxon>Buthidae</taxon>
        <taxon>Buthus</taxon>
    </lineage>
</organism>
<comment type="function">
    <text evidence="1">Inhibits potassium channel.</text>
</comment>
<comment type="subcellular location">
    <subcellularLocation>
        <location evidence="1">Secreted</location>
    </subcellularLocation>
</comment>
<comment type="tissue specificity">
    <text>Expressed by the venom gland.</text>
</comment>
<comment type="domain">
    <text evidence="1">Has the structural arrangement of an alpha-helix connected to a beta-sheet by disulfide bonds (CSalpha/beta).</text>
</comment>
<comment type="similarity">
    <text evidence="3">Belongs to the short scorpion toxin superfamily. Potassium channel inhibitor family. Alpha-KTx 16 subfamily.</text>
</comment>
<sequence length="58" mass="6512">MKILSVLLIALIICSINICSEAGLIDVRCYASRECWEPCRRVTGSAQAKCQNNQCRCY</sequence>
<protein>
    <recommendedName>
        <fullName>Potassium channel toxin alpha-KTx 16.6</fullName>
    </recommendedName>
    <alternativeName>
        <fullName>Toxin Tx608</fullName>
    </alternativeName>
</protein>
<keyword id="KW-1015">Disulfide bond</keyword>
<keyword id="KW-0872">Ion channel impairing toxin</keyword>
<keyword id="KW-0528">Neurotoxin</keyword>
<keyword id="KW-0632">Potassium channel impairing toxin</keyword>
<keyword id="KW-0964">Secreted</keyword>
<keyword id="KW-0732">Signal</keyword>
<keyword id="KW-0800">Toxin</keyword>
<accession>B8XH42</accession>
<dbReference type="EMBL" id="FJ360831">
    <property type="protein sequence ID" value="ACJ23151.1"/>
    <property type="molecule type" value="mRNA"/>
</dbReference>
<dbReference type="SMR" id="B8XH42"/>
<dbReference type="GO" id="GO:0005576">
    <property type="term" value="C:extracellular region"/>
    <property type="evidence" value="ECO:0007669"/>
    <property type="project" value="UniProtKB-SubCell"/>
</dbReference>
<dbReference type="GO" id="GO:0008200">
    <property type="term" value="F:ion channel inhibitor activity"/>
    <property type="evidence" value="ECO:0007669"/>
    <property type="project" value="InterPro"/>
</dbReference>
<dbReference type="GO" id="GO:0015459">
    <property type="term" value="F:potassium channel regulator activity"/>
    <property type="evidence" value="ECO:0007669"/>
    <property type="project" value="UniProtKB-KW"/>
</dbReference>
<dbReference type="GO" id="GO:0090729">
    <property type="term" value="F:toxin activity"/>
    <property type="evidence" value="ECO:0007669"/>
    <property type="project" value="UniProtKB-KW"/>
</dbReference>
<dbReference type="Gene3D" id="3.30.30.10">
    <property type="entry name" value="Knottin, scorpion toxin-like"/>
    <property type="match status" value="1"/>
</dbReference>
<dbReference type="InterPro" id="IPR036574">
    <property type="entry name" value="Scorpion_toxin-like_sf"/>
</dbReference>
<dbReference type="InterPro" id="IPR001947">
    <property type="entry name" value="Scorpion_toxinS_K_inh"/>
</dbReference>
<dbReference type="Pfam" id="PF00451">
    <property type="entry name" value="Toxin_2"/>
    <property type="match status" value="1"/>
</dbReference>
<dbReference type="SUPFAM" id="SSF57095">
    <property type="entry name" value="Scorpion toxin-like"/>
    <property type="match status" value="1"/>
</dbReference>
<dbReference type="PROSITE" id="PS01138">
    <property type="entry name" value="SCORP_SHORT_TOXIN"/>
    <property type="match status" value="1"/>
</dbReference>
<name>KA166_BUTIS</name>
<evidence type="ECO:0000250" key="1"/>
<evidence type="ECO:0000255" key="2"/>
<evidence type="ECO:0000305" key="3"/>